<gene>
    <name evidence="1" type="primary">gpmI</name>
    <name type="synonym">pgm</name>
    <name type="ordered locus">mhp615</name>
</gene>
<sequence length="512" mass="57894">MQKNRKNVKKKLVLIIIDGLGLRFESQGNGFALAKTPVFDRLFQEYPNSLIAASGQEVGLPEGQMGNSEVGHLNIGAGFVVYTGISIINNALKTGKFFENEKFILAFRHSIKTGFPLQIMGLFSPGGVHSHQDHLFALIDFAANFGVKKLNLHLFGDGRDVGPKSIKPWIKMLNLKLKNYENYKIASISGRFYSMDRDKMFDRVELGYNALLGKAENTFTDPIDYVNFQYEKGVSDEFFEPAINLKVNKKDFLADDHPVIFFNFRPDRARQLSHLILQTDLYEQKPKNPIKTDVFVSMMKYEGINCLVAFEEMRVENPLGKLICMAGFRQLRLAETQKYAHVTFFVDGGVELELENSDRILIDSLKVQSYADFPQMSAVEITDKLLEVGQKYDFIIMNFANPDMVGHTGDLKATIKAVEILDFQIGRICKWAEEKNFDFFITADHGNAELTEDENGNPSTKHTTFPVMLISSDKTIKLKSGKLANIAPTILDYLGLDKHPDMDHDSLIIKDK</sequence>
<feature type="chain" id="PRO_0000212169" description="2,3-bisphosphoglycerate-independent phosphoglycerate mutase">
    <location>
        <begin position="1"/>
        <end position="512"/>
    </location>
</feature>
<feature type="active site" description="Phosphoserine intermediate" evidence="1">
    <location>
        <position position="68"/>
    </location>
</feature>
<feature type="binding site" evidence="1">
    <location>
        <position position="18"/>
    </location>
    <ligand>
        <name>Mn(2+)</name>
        <dbReference type="ChEBI" id="CHEBI:29035"/>
        <label>2</label>
    </ligand>
</feature>
<feature type="binding site" evidence="1">
    <location>
        <position position="68"/>
    </location>
    <ligand>
        <name>Mn(2+)</name>
        <dbReference type="ChEBI" id="CHEBI:29035"/>
        <label>2</label>
    </ligand>
</feature>
<feature type="binding site" evidence="1">
    <location>
        <position position="129"/>
    </location>
    <ligand>
        <name>substrate</name>
    </ligand>
</feature>
<feature type="binding site" evidence="1">
    <location>
        <begin position="159"/>
        <end position="160"/>
    </location>
    <ligand>
        <name>substrate</name>
    </ligand>
</feature>
<feature type="binding site" evidence="1">
    <location>
        <position position="191"/>
    </location>
    <ligand>
        <name>substrate</name>
    </ligand>
</feature>
<feature type="binding site" evidence="1">
    <location>
        <position position="197"/>
    </location>
    <ligand>
        <name>substrate</name>
    </ligand>
</feature>
<feature type="binding site" evidence="1">
    <location>
        <begin position="265"/>
        <end position="268"/>
    </location>
    <ligand>
        <name>substrate</name>
    </ligand>
</feature>
<feature type="binding site" evidence="1">
    <location>
        <position position="338"/>
    </location>
    <ligand>
        <name>substrate</name>
    </ligand>
</feature>
<feature type="binding site" evidence="1">
    <location>
        <position position="403"/>
    </location>
    <ligand>
        <name>Mn(2+)</name>
        <dbReference type="ChEBI" id="CHEBI:29035"/>
        <label>1</label>
    </ligand>
</feature>
<feature type="binding site" evidence="1">
    <location>
        <position position="407"/>
    </location>
    <ligand>
        <name>Mn(2+)</name>
        <dbReference type="ChEBI" id="CHEBI:29035"/>
        <label>1</label>
    </ligand>
</feature>
<feature type="binding site" evidence="1">
    <location>
        <position position="444"/>
    </location>
    <ligand>
        <name>Mn(2+)</name>
        <dbReference type="ChEBI" id="CHEBI:29035"/>
        <label>2</label>
    </ligand>
</feature>
<feature type="binding site" evidence="1">
    <location>
        <position position="445"/>
    </location>
    <ligand>
        <name>Mn(2+)</name>
        <dbReference type="ChEBI" id="CHEBI:29035"/>
        <label>2</label>
    </ligand>
</feature>
<feature type="binding site" evidence="1">
    <location>
        <position position="462"/>
    </location>
    <ligand>
        <name>Mn(2+)</name>
        <dbReference type="ChEBI" id="CHEBI:29035"/>
        <label>1</label>
    </ligand>
</feature>
<evidence type="ECO:0000255" key="1">
    <source>
        <dbReference type="HAMAP-Rule" id="MF_01038"/>
    </source>
</evidence>
<comment type="function">
    <text evidence="1">Catalyzes the interconversion of 2-phosphoglycerate and 3-phosphoglycerate.</text>
</comment>
<comment type="catalytic activity">
    <reaction evidence="1">
        <text>(2R)-2-phosphoglycerate = (2R)-3-phosphoglycerate</text>
        <dbReference type="Rhea" id="RHEA:15901"/>
        <dbReference type="ChEBI" id="CHEBI:58272"/>
        <dbReference type="ChEBI" id="CHEBI:58289"/>
        <dbReference type="EC" id="5.4.2.12"/>
    </reaction>
</comment>
<comment type="cofactor">
    <cofactor evidence="1">
        <name>Mn(2+)</name>
        <dbReference type="ChEBI" id="CHEBI:29035"/>
    </cofactor>
    <text evidence="1">Binds 2 manganese ions per subunit.</text>
</comment>
<comment type="pathway">
    <text evidence="1">Carbohydrate degradation; glycolysis; pyruvate from D-glyceraldehyde 3-phosphate: step 3/5.</text>
</comment>
<comment type="subunit">
    <text evidence="1">Monomer.</text>
</comment>
<comment type="similarity">
    <text evidence="1">Belongs to the BPG-independent phosphoglycerate mutase family.</text>
</comment>
<keyword id="KW-0324">Glycolysis</keyword>
<keyword id="KW-0413">Isomerase</keyword>
<keyword id="KW-0464">Manganese</keyword>
<keyword id="KW-0479">Metal-binding</keyword>
<name>GPMI_MESH2</name>
<accession>Q5ZZU2</accession>
<proteinExistence type="inferred from homology"/>
<organism>
    <name type="scientific">Mesomycoplasma hyopneumoniae (strain 232)</name>
    <name type="common">Mycoplasma hyopneumoniae</name>
    <dbReference type="NCBI Taxonomy" id="295358"/>
    <lineage>
        <taxon>Bacteria</taxon>
        <taxon>Bacillati</taxon>
        <taxon>Mycoplasmatota</taxon>
        <taxon>Mycoplasmoidales</taxon>
        <taxon>Metamycoplasmataceae</taxon>
        <taxon>Mesomycoplasma</taxon>
    </lineage>
</organism>
<dbReference type="EC" id="5.4.2.12" evidence="1"/>
<dbReference type="EMBL" id="AE017332">
    <property type="protein sequence ID" value="AAV27635.1"/>
    <property type="molecule type" value="Genomic_DNA"/>
</dbReference>
<dbReference type="SMR" id="Q5ZZU2"/>
<dbReference type="KEGG" id="mhy:mhp615"/>
<dbReference type="eggNOG" id="COG0696">
    <property type="taxonomic scope" value="Bacteria"/>
</dbReference>
<dbReference type="HOGENOM" id="CLU_026099_2_0_14"/>
<dbReference type="PhylomeDB" id="Q5ZZU2"/>
<dbReference type="UniPathway" id="UPA00109">
    <property type="reaction ID" value="UER00186"/>
</dbReference>
<dbReference type="Proteomes" id="UP000006822">
    <property type="component" value="Chromosome"/>
</dbReference>
<dbReference type="GO" id="GO:0005829">
    <property type="term" value="C:cytosol"/>
    <property type="evidence" value="ECO:0007669"/>
    <property type="project" value="TreeGrafter"/>
</dbReference>
<dbReference type="GO" id="GO:0030145">
    <property type="term" value="F:manganese ion binding"/>
    <property type="evidence" value="ECO:0007669"/>
    <property type="project" value="UniProtKB-UniRule"/>
</dbReference>
<dbReference type="GO" id="GO:0004619">
    <property type="term" value="F:phosphoglycerate mutase activity"/>
    <property type="evidence" value="ECO:0007669"/>
    <property type="project" value="UniProtKB-EC"/>
</dbReference>
<dbReference type="GO" id="GO:0006007">
    <property type="term" value="P:glucose catabolic process"/>
    <property type="evidence" value="ECO:0007669"/>
    <property type="project" value="InterPro"/>
</dbReference>
<dbReference type="GO" id="GO:0006096">
    <property type="term" value="P:glycolytic process"/>
    <property type="evidence" value="ECO:0007669"/>
    <property type="project" value="UniProtKB-UniRule"/>
</dbReference>
<dbReference type="CDD" id="cd16010">
    <property type="entry name" value="iPGM"/>
    <property type="match status" value="1"/>
</dbReference>
<dbReference type="FunFam" id="3.40.1450.10:FF:000002">
    <property type="entry name" value="2,3-bisphosphoglycerate-independent phosphoglycerate mutase"/>
    <property type="match status" value="1"/>
</dbReference>
<dbReference type="Gene3D" id="3.40.720.10">
    <property type="entry name" value="Alkaline Phosphatase, subunit A"/>
    <property type="match status" value="1"/>
</dbReference>
<dbReference type="Gene3D" id="3.40.1450.10">
    <property type="entry name" value="BPG-independent phosphoglycerate mutase, domain B"/>
    <property type="match status" value="1"/>
</dbReference>
<dbReference type="HAMAP" id="MF_01038">
    <property type="entry name" value="GpmI"/>
    <property type="match status" value="1"/>
</dbReference>
<dbReference type="InterPro" id="IPR017850">
    <property type="entry name" value="Alkaline_phosphatase_core_sf"/>
</dbReference>
<dbReference type="InterPro" id="IPR011258">
    <property type="entry name" value="BPG-indep_PGM_N"/>
</dbReference>
<dbReference type="InterPro" id="IPR006124">
    <property type="entry name" value="Metalloenzyme"/>
</dbReference>
<dbReference type="InterPro" id="IPR036646">
    <property type="entry name" value="PGAM_B_sf"/>
</dbReference>
<dbReference type="InterPro" id="IPR005995">
    <property type="entry name" value="Pgm_bpd_ind"/>
</dbReference>
<dbReference type="NCBIfam" id="TIGR01307">
    <property type="entry name" value="pgm_bpd_ind"/>
    <property type="match status" value="1"/>
</dbReference>
<dbReference type="PANTHER" id="PTHR31637">
    <property type="entry name" value="2,3-BISPHOSPHOGLYCERATE-INDEPENDENT PHOSPHOGLYCERATE MUTASE"/>
    <property type="match status" value="1"/>
</dbReference>
<dbReference type="PANTHER" id="PTHR31637:SF0">
    <property type="entry name" value="2,3-BISPHOSPHOGLYCERATE-INDEPENDENT PHOSPHOGLYCERATE MUTASE"/>
    <property type="match status" value="1"/>
</dbReference>
<dbReference type="Pfam" id="PF06415">
    <property type="entry name" value="iPGM_N"/>
    <property type="match status" value="1"/>
</dbReference>
<dbReference type="Pfam" id="PF01676">
    <property type="entry name" value="Metalloenzyme"/>
    <property type="match status" value="1"/>
</dbReference>
<dbReference type="PIRSF" id="PIRSF001492">
    <property type="entry name" value="IPGAM"/>
    <property type="match status" value="1"/>
</dbReference>
<dbReference type="SUPFAM" id="SSF64158">
    <property type="entry name" value="2,3-Bisphosphoglycerate-independent phosphoglycerate mutase, substrate-binding domain"/>
    <property type="match status" value="1"/>
</dbReference>
<dbReference type="SUPFAM" id="SSF53649">
    <property type="entry name" value="Alkaline phosphatase-like"/>
    <property type="match status" value="1"/>
</dbReference>
<protein>
    <recommendedName>
        <fullName evidence="1">2,3-bisphosphoglycerate-independent phosphoglycerate mutase</fullName>
        <shortName evidence="1">BPG-independent PGAM</shortName>
        <shortName evidence="1">Phosphoglyceromutase</shortName>
        <shortName evidence="1">iPGM</shortName>
        <ecNumber evidence="1">5.4.2.12</ecNumber>
    </recommendedName>
</protein>
<reference key="1">
    <citation type="journal article" date="2004" name="J. Bacteriol.">
        <title>The genome sequence of Mycoplasma hyopneumoniae strain 232, the agent of swine mycoplasmosis.</title>
        <authorList>
            <person name="Minion F.C."/>
            <person name="Lefkowitz E.J."/>
            <person name="Madsen M.L."/>
            <person name="Cleary B.J."/>
            <person name="Swartzell S.M."/>
            <person name="Mahairas G.G."/>
        </authorList>
    </citation>
    <scope>NUCLEOTIDE SEQUENCE [LARGE SCALE GENOMIC DNA]</scope>
    <source>
        <strain>232</strain>
    </source>
</reference>